<gene>
    <name type="ordered locus">MW1820</name>
</gene>
<reference key="1">
    <citation type="journal article" date="2002" name="Lancet">
        <title>Genome and virulence determinants of high virulence community-acquired MRSA.</title>
        <authorList>
            <person name="Baba T."/>
            <person name="Takeuchi F."/>
            <person name="Kuroda M."/>
            <person name="Yuzawa H."/>
            <person name="Aoki K."/>
            <person name="Oguchi A."/>
            <person name="Nagai Y."/>
            <person name="Iwama N."/>
            <person name="Asano K."/>
            <person name="Naimi T."/>
            <person name="Kuroda H."/>
            <person name="Cui L."/>
            <person name="Yamamoto K."/>
            <person name="Hiramatsu K."/>
        </authorList>
    </citation>
    <scope>NUCLEOTIDE SEQUENCE [LARGE SCALE GENOMIC DNA]</scope>
    <source>
        <strain>MW2</strain>
    </source>
</reference>
<feature type="chain" id="PRO_0000291420" description="UPF0435 protein MW1820">
    <location>
        <begin position="1"/>
        <end position="68"/>
    </location>
</feature>
<proteinExistence type="inferred from homology"/>
<name>Y1820_STAAW</name>
<sequence length="68" mass="7775">MAMTNEEKVLAIREKLNIVNQGLLDPEKYKNANEEELTDIYDFVQSRERLSPSEVTAIADALGQLRHD</sequence>
<protein>
    <recommendedName>
        <fullName evidence="1">UPF0435 protein MW1820</fullName>
    </recommendedName>
</protein>
<comment type="similarity">
    <text evidence="1">Belongs to the UPF0435 family.</text>
</comment>
<accession>Q7A0I3</accession>
<evidence type="ECO:0000255" key="1">
    <source>
        <dbReference type="HAMAP-Rule" id="MF_00829"/>
    </source>
</evidence>
<organism>
    <name type="scientific">Staphylococcus aureus (strain MW2)</name>
    <dbReference type="NCBI Taxonomy" id="196620"/>
    <lineage>
        <taxon>Bacteria</taxon>
        <taxon>Bacillati</taxon>
        <taxon>Bacillota</taxon>
        <taxon>Bacilli</taxon>
        <taxon>Bacillales</taxon>
        <taxon>Staphylococcaceae</taxon>
        <taxon>Staphylococcus</taxon>
    </lineage>
</organism>
<dbReference type="EMBL" id="BA000033">
    <property type="protein sequence ID" value="BAB95685.1"/>
    <property type="molecule type" value="Genomic_DNA"/>
</dbReference>
<dbReference type="SMR" id="Q7A0I3"/>
<dbReference type="KEGG" id="sam:MW1820"/>
<dbReference type="HOGENOM" id="CLU_199533_0_0_9"/>
<dbReference type="HAMAP" id="MF_00829">
    <property type="entry name" value="UPF0435"/>
    <property type="match status" value="1"/>
</dbReference>
<dbReference type="InterPro" id="IPR009507">
    <property type="entry name" value="UPF0435"/>
</dbReference>
<dbReference type="Pfam" id="PF06569">
    <property type="entry name" value="DUF1128"/>
    <property type="match status" value="1"/>
</dbReference>